<evidence type="ECO:0000255" key="1">
    <source>
        <dbReference type="HAMAP-Rule" id="MF_00135"/>
    </source>
</evidence>
<sequence>MSETLIKICGLTDEDGVDAAVEAGVDMIGFVFFEPSPRDLDPARAAELLDGVPHAEEGGPLRVGLFVDADDATLEAVFAGVRLDVLQFHGEESPERVEWARLEYGLPVIKALPIASAADLERAALYAEVADYLLFDARPPAGADRPGGHAQTFDWSLLAGFSAPVPWLLAGGLTPENVAEAIKVSGATAVDVSSGVETVRGIKDPERVSAFVKAVREG</sequence>
<gene>
    <name evidence="1" type="primary">trpF</name>
    <name type="ordered locus">Rru_A3425</name>
</gene>
<proteinExistence type="inferred from homology"/>
<name>TRPF_RHORT</name>
<feature type="chain" id="PRO_1000018636" description="N-(5'-phosphoribosyl)anthranilate isomerase">
    <location>
        <begin position="1"/>
        <end position="218"/>
    </location>
</feature>
<comment type="catalytic activity">
    <reaction evidence="1">
        <text>N-(5-phospho-beta-D-ribosyl)anthranilate = 1-(2-carboxyphenylamino)-1-deoxy-D-ribulose 5-phosphate</text>
        <dbReference type="Rhea" id="RHEA:21540"/>
        <dbReference type="ChEBI" id="CHEBI:18277"/>
        <dbReference type="ChEBI" id="CHEBI:58613"/>
        <dbReference type="EC" id="5.3.1.24"/>
    </reaction>
</comment>
<comment type="pathway">
    <text evidence="1">Amino-acid biosynthesis; L-tryptophan biosynthesis; L-tryptophan from chorismate: step 3/5.</text>
</comment>
<comment type="similarity">
    <text evidence="1">Belongs to the TrpF family.</text>
</comment>
<organism>
    <name type="scientific">Rhodospirillum rubrum (strain ATCC 11170 / ATH 1.1.1 / DSM 467 / LMG 4362 / NCIMB 8255 / S1)</name>
    <dbReference type="NCBI Taxonomy" id="269796"/>
    <lineage>
        <taxon>Bacteria</taxon>
        <taxon>Pseudomonadati</taxon>
        <taxon>Pseudomonadota</taxon>
        <taxon>Alphaproteobacteria</taxon>
        <taxon>Rhodospirillales</taxon>
        <taxon>Rhodospirillaceae</taxon>
        <taxon>Rhodospirillum</taxon>
    </lineage>
</organism>
<reference key="1">
    <citation type="journal article" date="2011" name="Stand. Genomic Sci.">
        <title>Complete genome sequence of Rhodospirillum rubrum type strain (S1).</title>
        <authorList>
            <person name="Munk A.C."/>
            <person name="Copeland A."/>
            <person name="Lucas S."/>
            <person name="Lapidus A."/>
            <person name="Del Rio T.G."/>
            <person name="Barry K."/>
            <person name="Detter J.C."/>
            <person name="Hammon N."/>
            <person name="Israni S."/>
            <person name="Pitluck S."/>
            <person name="Brettin T."/>
            <person name="Bruce D."/>
            <person name="Han C."/>
            <person name="Tapia R."/>
            <person name="Gilna P."/>
            <person name="Schmutz J."/>
            <person name="Larimer F."/>
            <person name="Land M."/>
            <person name="Kyrpides N.C."/>
            <person name="Mavromatis K."/>
            <person name="Richardson P."/>
            <person name="Rohde M."/>
            <person name="Goeker M."/>
            <person name="Klenk H.P."/>
            <person name="Zhang Y."/>
            <person name="Roberts G.P."/>
            <person name="Reslewic S."/>
            <person name="Schwartz D.C."/>
        </authorList>
    </citation>
    <scope>NUCLEOTIDE SEQUENCE [LARGE SCALE GENOMIC DNA]</scope>
    <source>
        <strain>ATCC 11170 / ATH 1.1.1 / DSM 467 / LMG 4362 / NCIMB 8255 / S1</strain>
    </source>
</reference>
<protein>
    <recommendedName>
        <fullName evidence="1">N-(5'-phosphoribosyl)anthranilate isomerase</fullName>
        <shortName evidence="1">PRAI</shortName>
        <ecNumber evidence="1">5.3.1.24</ecNumber>
    </recommendedName>
</protein>
<keyword id="KW-0028">Amino-acid biosynthesis</keyword>
<keyword id="KW-0057">Aromatic amino acid biosynthesis</keyword>
<keyword id="KW-0413">Isomerase</keyword>
<keyword id="KW-1185">Reference proteome</keyword>
<keyword id="KW-0822">Tryptophan biosynthesis</keyword>
<accession>Q2RNS6</accession>
<dbReference type="EC" id="5.3.1.24" evidence="1"/>
<dbReference type="EMBL" id="CP000230">
    <property type="protein sequence ID" value="ABC24219.1"/>
    <property type="molecule type" value="Genomic_DNA"/>
</dbReference>
<dbReference type="RefSeq" id="WP_011391172.1">
    <property type="nucleotide sequence ID" value="NC_007643.1"/>
</dbReference>
<dbReference type="RefSeq" id="YP_428506.1">
    <property type="nucleotide sequence ID" value="NC_007643.1"/>
</dbReference>
<dbReference type="SMR" id="Q2RNS6"/>
<dbReference type="STRING" id="269796.Rru_A3425"/>
<dbReference type="EnsemblBacteria" id="ABC24219">
    <property type="protein sequence ID" value="ABC24219"/>
    <property type="gene ID" value="Rru_A3425"/>
</dbReference>
<dbReference type="KEGG" id="rru:Rru_A3425"/>
<dbReference type="PATRIC" id="fig|269796.9.peg.3541"/>
<dbReference type="eggNOG" id="COG0135">
    <property type="taxonomic scope" value="Bacteria"/>
</dbReference>
<dbReference type="HOGENOM" id="CLU_076364_1_1_5"/>
<dbReference type="PhylomeDB" id="Q2RNS6"/>
<dbReference type="UniPathway" id="UPA00035">
    <property type="reaction ID" value="UER00042"/>
</dbReference>
<dbReference type="Proteomes" id="UP000001929">
    <property type="component" value="Chromosome"/>
</dbReference>
<dbReference type="GO" id="GO:0004640">
    <property type="term" value="F:phosphoribosylanthranilate isomerase activity"/>
    <property type="evidence" value="ECO:0007669"/>
    <property type="project" value="UniProtKB-UniRule"/>
</dbReference>
<dbReference type="GO" id="GO:0000162">
    <property type="term" value="P:L-tryptophan biosynthetic process"/>
    <property type="evidence" value="ECO:0007669"/>
    <property type="project" value="UniProtKB-UniRule"/>
</dbReference>
<dbReference type="CDD" id="cd00405">
    <property type="entry name" value="PRAI"/>
    <property type="match status" value="1"/>
</dbReference>
<dbReference type="Gene3D" id="3.20.20.70">
    <property type="entry name" value="Aldolase class I"/>
    <property type="match status" value="1"/>
</dbReference>
<dbReference type="HAMAP" id="MF_00135">
    <property type="entry name" value="PRAI"/>
    <property type="match status" value="1"/>
</dbReference>
<dbReference type="InterPro" id="IPR013785">
    <property type="entry name" value="Aldolase_TIM"/>
</dbReference>
<dbReference type="InterPro" id="IPR001240">
    <property type="entry name" value="PRAI_dom"/>
</dbReference>
<dbReference type="InterPro" id="IPR011060">
    <property type="entry name" value="RibuloseP-bd_barrel"/>
</dbReference>
<dbReference type="InterPro" id="IPR044643">
    <property type="entry name" value="TrpF_fam"/>
</dbReference>
<dbReference type="NCBIfam" id="NF002295">
    <property type="entry name" value="PRK01222.1-1"/>
    <property type="match status" value="1"/>
</dbReference>
<dbReference type="PANTHER" id="PTHR42894">
    <property type="entry name" value="N-(5'-PHOSPHORIBOSYL)ANTHRANILATE ISOMERASE"/>
    <property type="match status" value="1"/>
</dbReference>
<dbReference type="PANTHER" id="PTHR42894:SF1">
    <property type="entry name" value="N-(5'-PHOSPHORIBOSYL)ANTHRANILATE ISOMERASE"/>
    <property type="match status" value="1"/>
</dbReference>
<dbReference type="Pfam" id="PF00697">
    <property type="entry name" value="PRAI"/>
    <property type="match status" value="1"/>
</dbReference>
<dbReference type="SUPFAM" id="SSF51366">
    <property type="entry name" value="Ribulose-phoshate binding barrel"/>
    <property type="match status" value="1"/>
</dbReference>